<comment type="function">
    <text evidence="1">Major role in the synthesis of nucleoside triphosphates other than ATP. The ATP gamma phosphate is transferred to the NDP beta phosphate via a ping-pong mechanism, using a phosphorylated active-site intermediate.</text>
</comment>
<comment type="catalytic activity">
    <reaction evidence="1">
        <text>a 2'-deoxyribonucleoside 5'-diphosphate + ATP = a 2'-deoxyribonucleoside 5'-triphosphate + ADP</text>
        <dbReference type="Rhea" id="RHEA:44640"/>
        <dbReference type="ChEBI" id="CHEBI:30616"/>
        <dbReference type="ChEBI" id="CHEBI:61560"/>
        <dbReference type="ChEBI" id="CHEBI:73316"/>
        <dbReference type="ChEBI" id="CHEBI:456216"/>
        <dbReference type="EC" id="2.7.4.6"/>
    </reaction>
</comment>
<comment type="catalytic activity">
    <reaction evidence="1">
        <text>a ribonucleoside 5'-diphosphate + ATP = a ribonucleoside 5'-triphosphate + ADP</text>
        <dbReference type="Rhea" id="RHEA:18113"/>
        <dbReference type="ChEBI" id="CHEBI:30616"/>
        <dbReference type="ChEBI" id="CHEBI:57930"/>
        <dbReference type="ChEBI" id="CHEBI:61557"/>
        <dbReference type="ChEBI" id="CHEBI:456216"/>
        <dbReference type="EC" id="2.7.4.6"/>
    </reaction>
</comment>
<comment type="cofactor">
    <cofactor evidence="1">
        <name>Mg(2+)</name>
        <dbReference type="ChEBI" id="CHEBI:18420"/>
    </cofactor>
</comment>
<comment type="subunit">
    <text evidence="1">Homotetramer.</text>
</comment>
<comment type="subcellular location">
    <subcellularLocation>
        <location evidence="1">Cytoplasm</location>
    </subcellularLocation>
</comment>
<comment type="similarity">
    <text evidence="1">Belongs to the NDK family.</text>
</comment>
<sequence>MMTERTFSIIKSDAVKRNLIGAILTRFEQNGFKIIASKMVRLTREQAEGFYAEHQGKEFFAPLVEYMMSSPIVVSVLEKENAVKDYRTLIGTTNPETAEEGTIRKDFALSQRENSVHGSDSIENANREIAYFFTDCEIFER</sequence>
<evidence type="ECO:0000255" key="1">
    <source>
        <dbReference type="HAMAP-Rule" id="MF_00451"/>
    </source>
</evidence>
<feature type="chain" id="PRO_0000226563" description="Nucleoside diphosphate kinase">
    <location>
        <begin position="1"/>
        <end position="141"/>
    </location>
</feature>
<feature type="active site" description="Pros-phosphohistidine intermediate" evidence="1">
    <location>
        <position position="117"/>
    </location>
</feature>
<feature type="binding site" evidence="1">
    <location>
        <position position="11"/>
    </location>
    <ligand>
        <name>ATP</name>
        <dbReference type="ChEBI" id="CHEBI:30616"/>
    </ligand>
</feature>
<feature type="binding site" evidence="1">
    <location>
        <position position="59"/>
    </location>
    <ligand>
        <name>ATP</name>
        <dbReference type="ChEBI" id="CHEBI:30616"/>
    </ligand>
</feature>
<feature type="binding site" evidence="1">
    <location>
        <position position="87"/>
    </location>
    <ligand>
        <name>ATP</name>
        <dbReference type="ChEBI" id="CHEBI:30616"/>
    </ligand>
</feature>
<feature type="binding site" evidence="1">
    <location>
        <position position="93"/>
    </location>
    <ligand>
        <name>ATP</name>
        <dbReference type="ChEBI" id="CHEBI:30616"/>
    </ligand>
</feature>
<feature type="binding site" evidence="1">
    <location>
        <position position="104"/>
    </location>
    <ligand>
        <name>ATP</name>
        <dbReference type="ChEBI" id="CHEBI:30616"/>
    </ligand>
</feature>
<feature type="binding site" evidence="1">
    <location>
        <position position="114"/>
    </location>
    <ligand>
        <name>ATP</name>
        <dbReference type="ChEBI" id="CHEBI:30616"/>
    </ligand>
</feature>
<keyword id="KW-0067">ATP-binding</keyword>
<keyword id="KW-0963">Cytoplasm</keyword>
<keyword id="KW-0418">Kinase</keyword>
<keyword id="KW-0460">Magnesium</keyword>
<keyword id="KW-0479">Metal-binding</keyword>
<keyword id="KW-0546">Nucleotide metabolism</keyword>
<keyword id="KW-0547">Nucleotide-binding</keyword>
<keyword id="KW-0597">Phosphoprotein</keyword>
<keyword id="KW-0808">Transferase</keyword>
<proteinExistence type="inferred from homology"/>
<reference key="1">
    <citation type="journal article" date="2005" name="J. Bacteriol.">
        <title>Genomic sequence of an otitis media isolate of nontypeable Haemophilus influenzae: comparative study with H. influenzae serotype d, strain KW20.</title>
        <authorList>
            <person name="Harrison A."/>
            <person name="Dyer D.W."/>
            <person name="Gillaspy A."/>
            <person name="Ray W.C."/>
            <person name="Mungur R."/>
            <person name="Carson M.B."/>
            <person name="Zhong H."/>
            <person name="Gipson J."/>
            <person name="Gipson M."/>
            <person name="Johnson L.S."/>
            <person name="Lewis L."/>
            <person name="Bakaletz L.O."/>
            <person name="Munson R.S. Jr."/>
        </authorList>
    </citation>
    <scope>NUCLEOTIDE SEQUENCE [LARGE SCALE GENOMIC DNA]</scope>
    <source>
        <strain>86-028NP</strain>
    </source>
</reference>
<gene>
    <name evidence="1" type="primary">ndk</name>
    <name type="ordered locus">NTHI1039</name>
</gene>
<accession>Q4QM32</accession>
<name>NDK_HAEI8</name>
<organism>
    <name type="scientific">Haemophilus influenzae (strain 86-028NP)</name>
    <dbReference type="NCBI Taxonomy" id="281310"/>
    <lineage>
        <taxon>Bacteria</taxon>
        <taxon>Pseudomonadati</taxon>
        <taxon>Pseudomonadota</taxon>
        <taxon>Gammaproteobacteria</taxon>
        <taxon>Pasteurellales</taxon>
        <taxon>Pasteurellaceae</taxon>
        <taxon>Haemophilus</taxon>
    </lineage>
</organism>
<dbReference type="EC" id="2.7.4.6" evidence="1"/>
<dbReference type="EMBL" id="CP000057">
    <property type="protein sequence ID" value="AAX87915.1"/>
    <property type="molecule type" value="Genomic_DNA"/>
</dbReference>
<dbReference type="SMR" id="Q4QM32"/>
<dbReference type="KEGG" id="hit:NTHI1039"/>
<dbReference type="HOGENOM" id="CLU_060216_8_1_6"/>
<dbReference type="Proteomes" id="UP000002525">
    <property type="component" value="Chromosome"/>
</dbReference>
<dbReference type="GO" id="GO:0005737">
    <property type="term" value="C:cytoplasm"/>
    <property type="evidence" value="ECO:0007669"/>
    <property type="project" value="UniProtKB-SubCell"/>
</dbReference>
<dbReference type="GO" id="GO:0005524">
    <property type="term" value="F:ATP binding"/>
    <property type="evidence" value="ECO:0007669"/>
    <property type="project" value="UniProtKB-UniRule"/>
</dbReference>
<dbReference type="GO" id="GO:0046872">
    <property type="term" value="F:metal ion binding"/>
    <property type="evidence" value="ECO:0007669"/>
    <property type="project" value="UniProtKB-KW"/>
</dbReference>
<dbReference type="GO" id="GO:0004550">
    <property type="term" value="F:nucleoside diphosphate kinase activity"/>
    <property type="evidence" value="ECO:0007669"/>
    <property type="project" value="UniProtKB-UniRule"/>
</dbReference>
<dbReference type="GO" id="GO:0006241">
    <property type="term" value="P:CTP biosynthetic process"/>
    <property type="evidence" value="ECO:0007669"/>
    <property type="project" value="UniProtKB-UniRule"/>
</dbReference>
<dbReference type="GO" id="GO:0006183">
    <property type="term" value="P:GTP biosynthetic process"/>
    <property type="evidence" value="ECO:0007669"/>
    <property type="project" value="UniProtKB-UniRule"/>
</dbReference>
<dbReference type="GO" id="GO:0006228">
    <property type="term" value="P:UTP biosynthetic process"/>
    <property type="evidence" value="ECO:0007669"/>
    <property type="project" value="UniProtKB-UniRule"/>
</dbReference>
<dbReference type="CDD" id="cd04413">
    <property type="entry name" value="NDPk_I"/>
    <property type="match status" value="1"/>
</dbReference>
<dbReference type="FunFam" id="3.30.70.141:FF:000001">
    <property type="entry name" value="Nucleoside diphosphate kinase"/>
    <property type="match status" value="1"/>
</dbReference>
<dbReference type="Gene3D" id="3.30.70.141">
    <property type="entry name" value="Nucleoside diphosphate kinase-like domain"/>
    <property type="match status" value="1"/>
</dbReference>
<dbReference type="HAMAP" id="MF_00451">
    <property type="entry name" value="NDP_kinase"/>
    <property type="match status" value="1"/>
</dbReference>
<dbReference type="InterPro" id="IPR034907">
    <property type="entry name" value="NDK-like_dom"/>
</dbReference>
<dbReference type="InterPro" id="IPR036850">
    <property type="entry name" value="NDK-like_dom_sf"/>
</dbReference>
<dbReference type="InterPro" id="IPR001564">
    <property type="entry name" value="Nucleoside_diP_kinase"/>
</dbReference>
<dbReference type="InterPro" id="IPR023005">
    <property type="entry name" value="Nucleoside_diP_kinase_AS"/>
</dbReference>
<dbReference type="NCBIfam" id="NF001908">
    <property type="entry name" value="PRK00668.1"/>
    <property type="match status" value="1"/>
</dbReference>
<dbReference type="PANTHER" id="PTHR46161">
    <property type="entry name" value="NUCLEOSIDE DIPHOSPHATE KINASE"/>
    <property type="match status" value="1"/>
</dbReference>
<dbReference type="PANTHER" id="PTHR46161:SF3">
    <property type="entry name" value="NUCLEOSIDE DIPHOSPHATE KINASE DDB_G0292928-RELATED"/>
    <property type="match status" value="1"/>
</dbReference>
<dbReference type="Pfam" id="PF00334">
    <property type="entry name" value="NDK"/>
    <property type="match status" value="1"/>
</dbReference>
<dbReference type="PRINTS" id="PR01243">
    <property type="entry name" value="NUCDPKINASE"/>
</dbReference>
<dbReference type="SMART" id="SM00562">
    <property type="entry name" value="NDK"/>
    <property type="match status" value="1"/>
</dbReference>
<dbReference type="SUPFAM" id="SSF54919">
    <property type="entry name" value="Nucleoside diphosphate kinase, NDK"/>
    <property type="match status" value="1"/>
</dbReference>
<dbReference type="PROSITE" id="PS00469">
    <property type="entry name" value="NDPK"/>
    <property type="match status" value="1"/>
</dbReference>
<dbReference type="PROSITE" id="PS51374">
    <property type="entry name" value="NDPK_LIKE"/>
    <property type="match status" value="1"/>
</dbReference>
<protein>
    <recommendedName>
        <fullName evidence="1">Nucleoside diphosphate kinase</fullName>
        <shortName evidence="1">NDK</shortName>
        <shortName evidence="1">NDP kinase</shortName>
        <ecNumber evidence="1">2.7.4.6</ecNumber>
    </recommendedName>
    <alternativeName>
        <fullName evidence="1">Nucleoside-2-P kinase</fullName>
    </alternativeName>
</protein>